<keyword id="KW-0150">Chloroplast</keyword>
<keyword id="KW-0472">Membrane</keyword>
<keyword id="KW-0602">Photosynthesis</keyword>
<keyword id="KW-0603">Photosystem I</keyword>
<keyword id="KW-0934">Plastid</keyword>
<keyword id="KW-0793">Thylakoid</keyword>
<keyword id="KW-0812">Transmembrane</keyword>
<keyword id="KW-1133">Transmembrane helix</keyword>
<feature type="chain" id="PRO_0000194649" description="Photosystem I reaction center subunit VIII">
    <location>
        <begin position="1"/>
        <end position="36"/>
    </location>
</feature>
<feature type="transmembrane region" description="Helical" evidence="1">
    <location>
        <begin position="5"/>
        <end position="27"/>
    </location>
</feature>
<comment type="function">
    <text evidence="1">May help in the organization of the PsaL subunit.</text>
</comment>
<comment type="subcellular location">
    <subcellularLocation>
        <location evidence="1">Plastid</location>
        <location evidence="1">Chloroplast thylakoid membrane</location>
        <topology evidence="1">Single-pass membrane protein</topology>
    </subcellularLocation>
</comment>
<comment type="similarity">
    <text evidence="1">Belongs to the PsaI family.</text>
</comment>
<geneLocation type="chloroplast"/>
<name>PSAI_CHAGL</name>
<reference key="1">
    <citation type="journal article" date="2002" name="Proc. Natl. Acad. Sci. U.S.A.">
        <title>The chloroplast and mitochondrial genome sequences of the charophyte Chaetosphaeridium globosum: insights into the timing of the events that restructured organelle DNAs within the green algal lineage that led to land plants.</title>
        <authorList>
            <person name="Turmel M."/>
            <person name="Otis C."/>
            <person name="Lemieux C."/>
        </authorList>
    </citation>
    <scope>NUCLEOTIDE SEQUENCE [LARGE SCALE GENOMIC DNA]</scope>
    <source>
        <strain>M1311</strain>
    </source>
</reference>
<protein>
    <recommendedName>
        <fullName evidence="1">Photosystem I reaction center subunit VIII</fullName>
        <shortName evidence="1">PSI-I</shortName>
    </recommendedName>
</protein>
<organism>
    <name type="scientific">Chaetosphaeridium globosum</name>
    <name type="common">Charophycean green alga</name>
    <name type="synonym">Herposteiron globosum</name>
    <dbReference type="NCBI Taxonomy" id="96477"/>
    <lineage>
        <taxon>Eukaryota</taxon>
        <taxon>Viridiplantae</taxon>
        <taxon>Streptophyta</taxon>
        <taxon>Coleochaetophyceae</taxon>
        <taxon>Coleochaetales</taxon>
        <taxon>Chaetosphaeridiaceae</taxon>
        <taxon>Chaetosphaeridium</taxon>
    </lineage>
</organism>
<dbReference type="EMBL" id="AF494278">
    <property type="protein sequence ID" value="AAM96535.1"/>
    <property type="molecule type" value="Genomic_DNA"/>
</dbReference>
<dbReference type="RefSeq" id="NP_683813.1">
    <property type="nucleotide sequence ID" value="NC_004115.1"/>
</dbReference>
<dbReference type="SMR" id="Q8M9X5"/>
<dbReference type="GeneID" id="860691"/>
<dbReference type="GO" id="GO:0009535">
    <property type="term" value="C:chloroplast thylakoid membrane"/>
    <property type="evidence" value="ECO:0007669"/>
    <property type="project" value="UniProtKB-SubCell"/>
</dbReference>
<dbReference type="GO" id="GO:0009522">
    <property type="term" value="C:photosystem I"/>
    <property type="evidence" value="ECO:0007669"/>
    <property type="project" value="UniProtKB-KW"/>
</dbReference>
<dbReference type="GO" id="GO:0015979">
    <property type="term" value="P:photosynthesis"/>
    <property type="evidence" value="ECO:0007669"/>
    <property type="project" value="UniProtKB-UniRule"/>
</dbReference>
<dbReference type="HAMAP" id="MF_00431">
    <property type="entry name" value="PSI_PsaI"/>
    <property type="match status" value="1"/>
</dbReference>
<dbReference type="InterPro" id="IPR001302">
    <property type="entry name" value="PSI_PsaI"/>
</dbReference>
<dbReference type="InterPro" id="IPR036357">
    <property type="entry name" value="PSI_PsaI_sf"/>
</dbReference>
<dbReference type="NCBIfam" id="NF008830">
    <property type="entry name" value="PRK11877.1"/>
    <property type="match status" value="1"/>
</dbReference>
<dbReference type="NCBIfam" id="TIGR03052">
    <property type="entry name" value="PS_I_psaI"/>
    <property type="match status" value="1"/>
</dbReference>
<dbReference type="PANTHER" id="PTHR35775">
    <property type="match status" value="1"/>
</dbReference>
<dbReference type="PANTHER" id="PTHR35775:SF2">
    <property type="entry name" value="PHOTOSYSTEM I REACTION CENTER SUBUNIT VIII"/>
    <property type="match status" value="1"/>
</dbReference>
<dbReference type="Pfam" id="PF00796">
    <property type="entry name" value="PSI_8"/>
    <property type="match status" value="1"/>
</dbReference>
<dbReference type="SUPFAM" id="SSF81540">
    <property type="entry name" value="Subunit VIII of photosystem I reaction centre, PsaI"/>
    <property type="match status" value="1"/>
</dbReference>
<gene>
    <name evidence="1" type="primary">psaI</name>
</gene>
<proteinExistence type="inferred from homology"/>
<accession>Q8M9X5</accession>
<evidence type="ECO:0000255" key="1">
    <source>
        <dbReference type="HAMAP-Rule" id="MF_00431"/>
    </source>
</evidence>
<sequence length="36" mass="3876">MAASFLPSILVPLVGLVFPAIAIASLFIYIEQDEII</sequence>